<reference key="1">
    <citation type="journal article" date="2008" name="PLoS Genet.">
        <title>Complete genome sequence of the complex carbohydrate-degrading marine bacterium, Saccharophagus degradans strain 2-40 T.</title>
        <authorList>
            <person name="Weiner R.M."/>
            <person name="Taylor L.E. II"/>
            <person name="Henrissat B."/>
            <person name="Hauser L."/>
            <person name="Land M."/>
            <person name="Coutinho P.M."/>
            <person name="Rancurel C."/>
            <person name="Saunders E.H."/>
            <person name="Longmire A.G."/>
            <person name="Zhang H."/>
            <person name="Bayer E.A."/>
            <person name="Gilbert H.J."/>
            <person name="Larimer F."/>
            <person name="Zhulin I.B."/>
            <person name="Ekborg N.A."/>
            <person name="Lamed R."/>
            <person name="Richardson P.M."/>
            <person name="Borovok I."/>
            <person name="Hutcheson S."/>
        </authorList>
    </citation>
    <scope>NUCLEOTIDE SEQUENCE [LARGE SCALE GENOMIC DNA]</scope>
    <source>
        <strain>2-40 / ATCC 43961 / DSM 17024</strain>
    </source>
</reference>
<feature type="chain" id="PRO_0000334403" description="Na(+)/H(+) antiporter NhaA 1">
    <location>
        <begin position="1"/>
        <end position="464"/>
    </location>
</feature>
<feature type="transmembrane region" description="Helical" evidence="1">
    <location>
        <begin position="41"/>
        <end position="61"/>
    </location>
</feature>
<feature type="transmembrane region" description="Helical" evidence="1">
    <location>
        <begin position="85"/>
        <end position="105"/>
    </location>
</feature>
<feature type="transmembrane region" description="Helical" evidence="1">
    <location>
        <begin position="121"/>
        <end position="141"/>
    </location>
</feature>
<feature type="transmembrane region" description="Helical" evidence="1">
    <location>
        <begin position="150"/>
        <end position="170"/>
    </location>
</feature>
<feature type="transmembrane region" description="Helical" evidence="1">
    <location>
        <begin position="180"/>
        <end position="200"/>
    </location>
</feature>
<feature type="transmembrane region" description="Helical" evidence="1">
    <location>
        <begin position="207"/>
        <end position="227"/>
    </location>
</feature>
<feature type="transmembrane region" description="Helical" evidence="1">
    <location>
        <begin position="234"/>
        <end position="254"/>
    </location>
</feature>
<feature type="transmembrane region" description="Helical" evidence="1">
    <location>
        <begin position="329"/>
        <end position="349"/>
    </location>
</feature>
<feature type="transmembrane region" description="Helical" evidence="1">
    <location>
        <begin position="363"/>
        <end position="383"/>
    </location>
</feature>
<feature type="transmembrane region" description="Helical" evidence="1">
    <location>
        <begin position="399"/>
        <end position="419"/>
    </location>
</feature>
<feature type="transmembrane region" description="Helical" evidence="1">
    <location>
        <begin position="428"/>
        <end position="448"/>
    </location>
</feature>
<gene>
    <name evidence="1" type="primary">nhaA1</name>
    <name type="ordered locus">Sde_1762</name>
</gene>
<proteinExistence type="inferred from homology"/>
<protein>
    <recommendedName>
        <fullName evidence="1">Na(+)/H(+) antiporter NhaA 1</fullName>
    </recommendedName>
    <alternativeName>
        <fullName evidence="1">Sodium/proton antiporter NhaA 1</fullName>
    </alternativeName>
</protein>
<organism>
    <name type="scientific">Saccharophagus degradans (strain 2-40 / ATCC 43961 / DSM 17024)</name>
    <dbReference type="NCBI Taxonomy" id="203122"/>
    <lineage>
        <taxon>Bacteria</taxon>
        <taxon>Pseudomonadati</taxon>
        <taxon>Pseudomonadota</taxon>
        <taxon>Gammaproteobacteria</taxon>
        <taxon>Cellvibrionales</taxon>
        <taxon>Cellvibrionaceae</taxon>
        <taxon>Saccharophagus</taxon>
    </lineage>
</organism>
<sequence length="464" mass="50957">MSNETPKKFIPNEQNPMPRWEKKFNKILTPFERFVNRTTTGGLILMMAALIALALANSPLAHHYLHALHVPLGLNLGDWRIEKSLHHWVNDGLMALFFFVVGLELKREMLVGELAEIRKAVLPIVAAIGGMVIPAICYMSLNLNDETFRGWGIPMATDIAFALGVIALLASRVPKALITFLVALAIVDDLGAVVVIAVFYTQDLAWSFLIAGALLTCLLIFFNMIGIRKPSVYFFVGLILWFVFLKSGVHATLAGVITAFTIPAKPKFNTLTFSNRVQDILYKFRKGCEEDESILRNEHLSGLVQTLENGVVGVQTPLQRLEHSFHKPVAFFILPVFAIFNAGVTIDFGNAFQLFNHPITLGVVFGLLFGKFVGITGASWLAIRFGLCSLPNDTSMKHIIGASMLGSIGFTMSIFIAELAFVSQPEMIIQAKLGILLSSLVAGVAGYLWLHKLGGEKSRIGSSL</sequence>
<dbReference type="EMBL" id="CP000282">
    <property type="protein sequence ID" value="ABD81022.1"/>
    <property type="molecule type" value="Genomic_DNA"/>
</dbReference>
<dbReference type="RefSeq" id="WP_011468242.1">
    <property type="nucleotide sequence ID" value="NC_007912.1"/>
</dbReference>
<dbReference type="SMR" id="Q21JV7"/>
<dbReference type="STRING" id="203122.Sde_1762"/>
<dbReference type="GeneID" id="98613435"/>
<dbReference type="KEGG" id="sde:Sde_1762"/>
<dbReference type="eggNOG" id="COG3004">
    <property type="taxonomic scope" value="Bacteria"/>
</dbReference>
<dbReference type="HOGENOM" id="CLU_015803_1_2_6"/>
<dbReference type="OrthoDB" id="9808135at2"/>
<dbReference type="Proteomes" id="UP000001947">
    <property type="component" value="Chromosome"/>
</dbReference>
<dbReference type="GO" id="GO:0005886">
    <property type="term" value="C:plasma membrane"/>
    <property type="evidence" value="ECO:0007669"/>
    <property type="project" value="UniProtKB-SubCell"/>
</dbReference>
<dbReference type="GO" id="GO:0015385">
    <property type="term" value="F:sodium:proton antiporter activity"/>
    <property type="evidence" value="ECO:0007669"/>
    <property type="project" value="TreeGrafter"/>
</dbReference>
<dbReference type="GO" id="GO:0006885">
    <property type="term" value="P:regulation of pH"/>
    <property type="evidence" value="ECO:0007669"/>
    <property type="project" value="InterPro"/>
</dbReference>
<dbReference type="Gene3D" id="1.20.1530.10">
    <property type="entry name" value="Na+/H+ antiporter like domain"/>
    <property type="match status" value="1"/>
</dbReference>
<dbReference type="HAMAP" id="MF_01844">
    <property type="entry name" value="NhaA"/>
    <property type="match status" value="1"/>
</dbReference>
<dbReference type="InterPro" id="IPR023171">
    <property type="entry name" value="Na/H_antiporter_dom_sf"/>
</dbReference>
<dbReference type="InterPro" id="IPR004670">
    <property type="entry name" value="NhaA"/>
</dbReference>
<dbReference type="NCBIfam" id="TIGR00773">
    <property type="entry name" value="NhaA"/>
    <property type="match status" value="1"/>
</dbReference>
<dbReference type="PANTHER" id="PTHR30341:SF0">
    <property type="entry name" value="NA(+)_H(+) ANTIPORTER NHAA"/>
    <property type="match status" value="1"/>
</dbReference>
<dbReference type="PANTHER" id="PTHR30341">
    <property type="entry name" value="SODIUM ION/PROTON ANTIPORTER NHAA-RELATED"/>
    <property type="match status" value="1"/>
</dbReference>
<dbReference type="Pfam" id="PF06965">
    <property type="entry name" value="Na_H_antiport_1"/>
    <property type="match status" value="1"/>
</dbReference>
<accession>Q21JV7</accession>
<evidence type="ECO:0000255" key="1">
    <source>
        <dbReference type="HAMAP-Rule" id="MF_01844"/>
    </source>
</evidence>
<keyword id="KW-0050">Antiport</keyword>
<keyword id="KW-0997">Cell inner membrane</keyword>
<keyword id="KW-1003">Cell membrane</keyword>
<keyword id="KW-0406">Ion transport</keyword>
<keyword id="KW-0472">Membrane</keyword>
<keyword id="KW-1185">Reference proteome</keyword>
<keyword id="KW-0915">Sodium</keyword>
<keyword id="KW-0739">Sodium transport</keyword>
<keyword id="KW-0812">Transmembrane</keyword>
<keyword id="KW-1133">Transmembrane helix</keyword>
<keyword id="KW-0813">Transport</keyword>
<comment type="function">
    <text evidence="1">Na(+)/H(+) antiporter that extrudes sodium in exchange for external protons.</text>
</comment>
<comment type="catalytic activity">
    <reaction evidence="1">
        <text>Na(+)(in) + 2 H(+)(out) = Na(+)(out) + 2 H(+)(in)</text>
        <dbReference type="Rhea" id="RHEA:29251"/>
        <dbReference type="ChEBI" id="CHEBI:15378"/>
        <dbReference type="ChEBI" id="CHEBI:29101"/>
    </reaction>
    <physiologicalReaction direction="left-to-right" evidence="1">
        <dbReference type="Rhea" id="RHEA:29252"/>
    </physiologicalReaction>
</comment>
<comment type="subcellular location">
    <subcellularLocation>
        <location evidence="1">Cell inner membrane</location>
        <topology evidence="1">Multi-pass membrane protein</topology>
    </subcellularLocation>
</comment>
<comment type="similarity">
    <text evidence="1">Belongs to the NhaA Na(+)/H(+) (TC 2.A.33) antiporter family.</text>
</comment>
<name>NHAA1_SACD2</name>